<sequence length="597" mass="66100">MKHIRNFSIIAHIDHGKSTLSDRLIQVCGGLSEREMAAQVLDSMDIERERGITIKAQSVTLDYKAKDGETYQLNFIDTPGHVDFSYEVSRSLAACEGALLVVDAGQGVEAQTLANCYTAIEMELEVVPILNKIDLPAAEPERVAEEIEEIVGIDAMEATRCSAKTGIGVDDVLENIVTAIPPPEGDPEAPLQALIIDSWFDNYLGVVSLVRIKNGKLKKNDKIKVMSTDQVWGVDRLGIFTPKQIDTTELNTGEVGWVVCGIKDILGAPVGDTLTLAKGGSTERLPGFQKVKPQVYAGLFPVSSDDYENFRDALGKLSLNDASLFYEPESSAALGFGFRCGFLGMLHMEIIQERLEREYDLDLITTAPTVVYEVVKTDKTVLYVDSPAKLPAINDLEEIREPIARCNILVPSDYLGNVITLCVEKRGVQVDMVYHGNQVAVTYDLPMAEVVLDFFDRLKSTSRGYASLDYNFQRYEASNMVRVDVLLNGETVDALAIITHKDIAQSRGRLLVEKMKEFIPRQMFDIAIQAAIGNHIIARSTVKQLRKNVIAKCYGGDISRKKKLLKKQKEGKKRMKQIGNVELPQEAFLAILHVGKD</sequence>
<feature type="chain" id="PRO_1000190837" description="Elongation factor 4">
    <location>
        <begin position="1"/>
        <end position="597"/>
    </location>
</feature>
<feature type="domain" description="tr-type G">
    <location>
        <begin position="2"/>
        <end position="184"/>
    </location>
</feature>
<feature type="binding site" evidence="1">
    <location>
        <begin position="14"/>
        <end position="19"/>
    </location>
    <ligand>
        <name>GTP</name>
        <dbReference type="ChEBI" id="CHEBI:37565"/>
    </ligand>
</feature>
<feature type="binding site" evidence="1">
    <location>
        <begin position="131"/>
        <end position="134"/>
    </location>
    <ligand>
        <name>GTP</name>
        <dbReference type="ChEBI" id="CHEBI:37565"/>
    </ligand>
</feature>
<organism>
    <name type="scientific">Vibrio atlanticus (strain LGP32)</name>
    <name type="common">Vibrio splendidus (strain Mel32)</name>
    <dbReference type="NCBI Taxonomy" id="575788"/>
    <lineage>
        <taxon>Bacteria</taxon>
        <taxon>Pseudomonadati</taxon>
        <taxon>Pseudomonadota</taxon>
        <taxon>Gammaproteobacteria</taxon>
        <taxon>Vibrionales</taxon>
        <taxon>Vibrionaceae</taxon>
        <taxon>Vibrio</taxon>
    </lineage>
</organism>
<name>LEPA_VIBA3</name>
<protein>
    <recommendedName>
        <fullName evidence="1">Elongation factor 4</fullName>
        <shortName evidence="1">EF-4</shortName>
        <ecNumber evidence="1">3.6.5.n1</ecNumber>
    </recommendedName>
    <alternativeName>
        <fullName evidence="1">Ribosomal back-translocase LepA</fullName>
    </alternativeName>
</protein>
<evidence type="ECO:0000255" key="1">
    <source>
        <dbReference type="HAMAP-Rule" id="MF_00071"/>
    </source>
</evidence>
<dbReference type="EC" id="3.6.5.n1" evidence="1"/>
<dbReference type="EMBL" id="FM954972">
    <property type="protein sequence ID" value="CAV19832.1"/>
    <property type="molecule type" value="Genomic_DNA"/>
</dbReference>
<dbReference type="SMR" id="B7VK81"/>
<dbReference type="STRING" id="575788.VS_2621"/>
<dbReference type="KEGG" id="vsp:VS_2621"/>
<dbReference type="PATRIC" id="fig|575788.5.peg.3868"/>
<dbReference type="eggNOG" id="COG0481">
    <property type="taxonomic scope" value="Bacteria"/>
</dbReference>
<dbReference type="HOGENOM" id="CLU_009995_3_3_6"/>
<dbReference type="Proteomes" id="UP000009100">
    <property type="component" value="Chromosome 1"/>
</dbReference>
<dbReference type="GO" id="GO:0005886">
    <property type="term" value="C:plasma membrane"/>
    <property type="evidence" value="ECO:0007669"/>
    <property type="project" value="UniProtKB-SubCell"/>
</dbReference>
<dbReference type="GO" id="GO:0005525">
    <property type="term" value="F:GTP binding"/>
    <property type="evidence" value="ECO:0007669"/>
    <property type="project" value="UniProtKB-UniRule"/>
</dbReference>
<dbReference type="GO" id="GO:0003924">
    <property type="term" value="F:GTPase activity"/>
    <property type="evidence" value="ECO:0007669"/>
    <property type="project" value="UniProtKB-UniRule"/>
</dbReference>
<dbReference type="GO" id="GO:0097216">
    <property type="term" value="F:guanosine tetraphosphate binding"/>
    <property type="evidence" value="ECO:0007669"/>
    <property type="project" value="UniProtKB-ARBA"/>
</dbReference>
<dbReference type="GO" id="GO:0043022">
    <property type="term" value="F:ribosome binding"/>
    <property type="evidence" value="ECO:0007669"/>
    <property type="project" value="UniProtKB-UniRule"/>
</dbReference>
<dbReference type="GO" id="GO:0003746">
    <property type="term" value="F:translation elongation factor activity"/>
    <property type="evidence" value="ECO:0007669"/>
    <property type="project" value="UniProtKB-UniRule"/>
</dbReference>
<dbReference type="GO" id="GO:0045727">
    <property type="term" value="P:positive regulation of translation"/>
    <property type="evidence" value="ECO:0007669"/>
    <property type="project" value="UniProtKB-UniRule"/>
</dbReference>
<dbReference type="CDD" id="cd03699">
    <property type="entry name" value="EF4_II"/>
    <property type="match status" value="1"/>
</dbReference>
<dbReference type="CDD" id="cd16260">
    <property type="entry name" value="EF4_III"/>
    <property type="match status" value="1"/>
</dbReference>
<dbReference type="CDD" id="cd01890">
    <property type="entry name" value="LepA"/>
    <property type="match status" value="1"/>
</dbReference>
<dbReference type="CDD" id="cd03709">
    <property type="entry name" value="lepA_C"/>
    <property type="match status" value="1"/>
</dbReference>
<dbReference type="FunFam" id="3.40.50.300:FF:000078">
    <property type="entry name" value="Elongation factor 4"/>
    <property type="match status" value="1"/>
</dbReference>
<dbReference type="FunFam" id="2.40.30.10:FF:000015">
    <property type="entry name" value="Translation factor GUF1, mitochondrial"/>
    <property type="match status" value="1"/>
</dbReference>
<dbReference type="FunFam" id="3.30.70.240:FF:000007">
    <property type="entry name" value="Translation factor GUF1, mitochondrial"/>
    <property type="match status" value="1"/>
</dbReference>
<dbReference type="FunFam" id="3.30.70.2570:FF:000001">
    <property type="entry name" value="Translation factor GUF1, mitochondrial"/>
    <property type="match status" value="1"/>
</dbReference>
<dbReference type="FunFam" id="3.30.70.870:FF:000004">
    <property type="entry name" value="Translation factor GUF1, mitochondrial"/>
    <property type="match status" value="1"/>
</dbReference>
<dbReference type="Gene3D" id="3.30.70.240">
    <property type="match status" value="1"/>
</dbReference>
<dbReference type="Gene3D" id="3.30.70.2570">
    <property type="entry name" value="Elongation factor 4, C-terminal domain"/>
    <property type="match status" value="1"/>
</dbReference>
<dbReference type="Gene3D" id="3.30.70.870">
    <property type="entry name" value="Elongation Factor G (Translational Gtpase), domain 3"/>
    <property type="match status" value="1"/>
</dbReference>
<dbReference type="Gene3D" id="3.40.50.300">
    <property type="entry name" value="P-loop containing nucleotide triphosphate hydrolases"/>
    <property type="match status" value="1"/>
</dbReference>
<dbReference type="Gene3D" id="2.40.30.10">
    <property type="entry name" value="Translation factors"/>
    <property type="match status" value="1"/>
</dbReference>
<dbReference type="HAMAP" id="MF_00071">
    <property type="entry name" value="LepA"/>
    <property type="match status" value="1"/>
</dbReference>
<dbReference type="InterPro" id="IPR006297">
    <property type="entry name" value="EF-4"/>
</dbReference>
<dbReference type="InterPro" id="IPR035647">
    <property type="entry name" value="EFG_III/V"/>
</dbReference>
<dbReference type="InterPro" id="IPR000640">
    <property type="entry name" value="EFG_V-like"/>
</dbReference>
<dbReference type="InterPro" id="IPR004161">
    <property type="entry name" value="EFTu-like_2"/>
</dbReference>
<dbReference type="InterPro" id="IPR031157">
    <property type="entry name" value="G_TR_CS"/>
</dbReference>
<dbReference type="InterPro" id="IPR038363">
    <property type="entry name" value="LepA_C_sf"/>
</dbReference>
<dbReference type="InterPro" id="IPR013842">
    <property type="entry name" value="LepA_CTD"/>
</dbReference>
<dbReference type="InterPro" id="IPR035654">
    <property type="entry name" value="LepA_IV"/>
</dbReference>
<dbReference type="InterPro" id="IPR027417">
    <property type="entry name" value="P-loop_NTPase"/>
</dbReference>
<dbReference type="InterPro" id="IPR005225">
    <property type="entry name" value="Small_GTP-bd"/>
</dbReference>
<dbReference type="InterPro" id="IPR000795">
    <property type="entry name" value="T_Tr_GTP-bd_dom"/>
</dbReference>
<dbReference type="InterPro" id="IPR009000">
    <property type="entry name" value="Transl_B-barrel_sf"/>
</dbReference>
<dbReference type="NCBIfam" id="TIGR01393">
    <property type="entry name" value="lepA"/>
    <property type="match status" value="1"/>
</dbReference>
<dbReference type="NCBIfam" id="TIGR00231">
    <property type="entry name" value="small_GTP"/>
    <property type="match status" value="1"/>
</dbReference>
<dbReference type="PANTHER" id="PTHR43512:SF4">
    <property type="entry name" value="TRANSLATION FACTOR GUF1 HOMOLOG, CHLOROPLASTIC"/>
    <property type="match status" value="1"/>
</dbReference>
<dbReference type="PANTHER" id="PTHR43512">
    <property type="entry name" value="TRANSLATION FACTOR GUF1-RELATED"/>
    <property type="match status" value="1"/>
</dbReference>
<dbReference type="Pfam" id="PF00679">
    <property type="entry name" value="EFG_C"/>
    <property type="match status" value="1"/>
</dbReference>
<dbReference type="Pfam" id="PF00009">
    <property type="entry name" value="GTP_EFTU"/>
    <property type="match status" value="1"/>
</dbReference>
<dbReference type="Pfam" id="PF03144">
    <property type="entry name" value="GTP_EFTU_D2"/>
    <property type="match status" value="1"/>
</dbReference>
<dbReference type="Pfam" id="PF06421">
    <property type="entry name" value="LepA_C"/>
    <property type="match status" value="1"/>
</dbReference>
<dbReference type="PRINTS" id="PR00315">
    <property type="entry name" value="ELONGATNFCT"/>
</dbReference>
<dbReference type="SMART" id="SM00838">
    <property type="entry name" value="EFG_C"/>
    <property type="match status" value="1"/>
</dbReference>
<dbReference type="SUPFAM" id="SSF54980">
    <property type="entry name" value="EF-G C-terminal domain-like"/>
    <property type="match status" value="2"/>
</dbReference>
<dbReference type="SUPFAM" id="SSF52540">
    <property type="entry name" value="P-loop containing nucleoside triphosphate hydrolases"/>
    <property type="match status" value="1"/>
</dbReference>
<dbReference type="SUPFAM" id="SSF50447">
    <property type="entry name" value="Translation proteins"/>
    <property type="match status" value="1"/>
</dbReference>
<dbReference type="PROSITE" id="PS00301">
    <property type="entry name" value="G_TR_1"/>
    <property type="match status" value="1"/>
</dbReference>
<dbReference type="PROSITE" id="PS51722">
    <property type="entry name" value="G_TR_2"/>
    <property type="match status" value="1"/>
</dbReference>
<keyword id="KW-0997">Cell inner membrane</keyword>
<keyword id="KW-1003">Cell membrane</keyword>
<keyword id="KW-0342">GTP-binding</keyword>
<keyword id="KW-0378">Hydrolase</keyword>
<keyword id="KW-0472">Membrane</keyword>
<keyword id="KW-0547">Nucleotide-binding</keyword>
<keyword id="KW-0648">Protein biosynthesis</keyword>
<reference key="1">
    <citation type="submission" date="2009-02" db="EMBL/GenBank/DDBJ databases">
        <title>Vibrio splendidus str. LGP32 complete genome.</title>
        <authorList>
            <person name="Mazel D."/>
            <person name="Le Roux F."/>
        </authorList>
    </citation>
    <scope>NUCLEOTIDE SEQUENCE [LARGE SCALE GENOMIC DNA]</scope>
    <source>
        <strain>LGP32</strain>
    </source>
</reference>
<accession>B7VK81</accession>
<gene>
    <name evidence="1" type="primary">lepA</name>
    <name type="ordered locus">VS_2621</name>
</gene>
<proteinExistence type="inferred from homology"/>
<comment type="function">
    <text evidence="1">Required for accurate and efficient protein synthesis under certain stress conditions. May act as a fidelity factor of the translation reaction, by catalyzing a one-codon backward translocation of tRNAs on improperly translocated ribosomes. Back-translocation proceeds from a post-translocation (POST) complex to a pre-translocation (PRE) complex, thus giving elongation factor G a second chance to translocate the tRNAs correctly. Binds to ribosomes in a GTP-dependent manner.</text>
</comment>
<comment type="catalytic activity">
    <reaction evidence="1">
        <text>GTP + H2O = GDP + phosphate + H(+)</text>
        <dbReference type="Rhea" id="RHEA:19669"/>
        <dbReference type="ChEBI" id="CHEBI:15377"/>
        <dbReference type="ChEBI" id="CHEBI:15378"/>
        <dbReference type="ChEBI" id="CHEBI:37565"/>
        <dbReference type="ChEBI" id="CHEBI:43474"/>
        <dbReference type="ChEBI" id="CHEBI:58189"/>
        <dbReference type="EC" id="3.6.5.n1"/>
    </reaction>
</comment>
<comment type="subcellular location">
    <subcellularLocation>
        <location evidence="1">Cell inner membrane</location>
        <topology evidence="1">Peripheral membrane protein</topology>
        <orientation evidence="1">Cytoplasmic side</orientation>
    </subcellularLocation>
</comment>
<comment type="similarity">
    <text evidence="1">Belongs to the TRAFAC class translation factor GTPase superfamily. Classic translation factor GTPase family. LepA subfamily.</text>
</comment>